<evidence type="ECO:0000255" key="1">
    <source>
        <dbReference type="PROSITE-ProRule" id="PRU00520"/>
    </source>
</evidence>
<evidence type="ECO:0000305" key="2"/>
<gene>
    <name type="primary">acyP</name>
    <name type="ordered locus">lpl1848</name>
</gene>
<protein>
    <recommendedName>
        <fullName>Acylphosphatase</fullName>
        <ecNumber>3.6.1.7</ecNumber>
    </recommendedName>
    <alternativeName>
        <fullName>Acylphosphate phosphohydrolase</fullName>
    </alternativeName>
</protein>
<organism>
    <name type="scientific">Legionella pneumophila (strain Lens)</name>
    <dbReference type="NCBI Taxonomy" id="297245"/>
    <lineage>
        <taxon>Bacteria</taxon>
        <taxon>Pseudomonadati</taxon>
        <taxon>Pseudomonadota</taxon>
        <taxon>Gammaproteobacteria</taxon>
        <taxon>Legionellales</taxon>
        <taxon>Legionellaceae</taxon>
        <taxon>Legionella</taxon>
    </lineage>
</organism>
<dbReference type="EC" id="3.6.1.7"/>
<dbReference type="EMBL" id="CR628337">
    <property type="protein sequence ID" value="CAH16087.1"/>
    <property type="molecule type" value="Genomic_DNA"/>
</dbReference>
<dbReference type="RefSeq" id="WP_011215846.1">
    <property type="nucleotide sequence ID" value="NC_006369.1"/>
</dbReference>
<dbReference type="SMR" id="Q5WVG7"/>
<dbReference type="KEGG" id="lpf:lpl1848"/>
<dbReference type="LegioList" id="lpl1848"/>
<dbReference type="HOGENOM" id="CLU_141932_1_0_6"/>
<dbReference type="Proteomes" id="UP000002517">
    <property type="component" value="Chromosome"/>
</dbReference>
<dbReference type="GO" id="GO:0003998">
    <property type="term" value="F:acylphosphatase activity"/>
    <property type="evidence" value="ECO:0007669"/>
    <property type="project" value="UniProtKB-EC"/>
</dbReference>
<dbReference type="Gene3D" id="3.30.70.100">
    <property type="match status" value="1"/>
</dbReference>
<dbReference type="InterPro" id="IPR020456">
    <property type="entry name" value="Acylphosphatase"/>
</dbReference>
<dbReference type="InterPro" id="IPR001792">
    <property type="entry name" value="Acylphosphatase-like_dom"/>
</dbReference>
<dbReference type="InterPro" id="IPR036046">
    <property type="entry name" value="Acylphosphatase-like_dom_sf"/>
</dbReference>
<dbReference type="InterPro" id="IPR017968">
    <property type="entry name" value="Acylphosphatase_CS"/>
</dbReference>
<dbReference type="NCBIfam" id="NF011022">
    <property type="entry name" value="PRK14451.1"/>
    <property type="match status" value="1"/>
</dbReference>
<dbReference type="PANTHER" id="PTHR47268">
    <property type="entry name" value="ACYLPHOSPHATASE"/>
    <property type="match status" value="1"/>
</dbReference>
<dbReference type="PANTHER" id="PTHR47268:SF4">
    <property type="entry name" value="ACYLPHOSPHATASE"/>
    <property type="match status" value="1"/>
</dbReference>
<dbReference type="Pfam" id="PF00708">
    <property type="entry name" value="Acylphosphatase"/>
    <property type="match status" value="1"/>
</dbReference>
<dbReference type="SUPFAM" id="SSF54975">
    <property type="entry name" value="Acylphosphatase/BLUF domain-like"/>
    <property type="match status" value="1"/>
</dbReference>
<dbReference type="PROSITE" id="PS00150">
    <property type="entry name" value="ACYLPHOSPHATASE_1"/>
    <property type="match status" value="1"/>
</dbReference>
<dbReference type="PROSITE" id="PS00151">
    <property type="entry name" value="ACYLPHOSPHATASE_2"/>
    <property type="match status" value="1"/>
</dbReference>
<dbReference type="PROSITE" id="PS51160">
    <property type="entry name" value="ACYLPHOSPHATASE_3"/>
    <property type="match status" value="1"/>
</dbReference>
<keyword id="KW-0378">Hydrolase</keyword>
<feature type="chain" id="PRO_0000326733" description="Acylphosphatase">
    <location>
        <begin position="1"/>
        <end position="91"/>
    </location>
</feature>
<feature type="domain" description="Acylphosphatase-like" evidence="1">
    <location>
        <begin position="6"/>
        <end position="91"/>
    </location>
</feature>
<feature type="active site" evidence="1">
    <location>
        <position position="21"/>
    </location>
</feature>
<feature type="active site" evidence="1">
    <location>
        <position position="39"/>
    </location>
</feature>
<comment type="catalytic activity">
    <reaction>
        <text>an acyl phosphate + H2O = a carboxylate + phosphate + H(+)</text>
        <dbReference type="Rhea" id="RHEA:14965"/>
        <dbReference type="ChEBI" id="CHEBI:15377"/>
        <dbReference type="ChEBI" id="CHEBI:15378"/>
        <dbReference type="ChEBI" id="CHEBI:29067"/>
        <dbReference type="ChEBI" id="CHEBI:43474"/>
        <dbReference type="ChEBI" id="CHEBI:59918"/>
        <dbReference type="EC" id="3.6.1.7"/>
    </reaction>
</comment>
<comment type="similarity">
    <text evidence="2">Belongs to the acylphosphatase family.</text>
</comment>
<accession>Q5WVG7</accession>
<sequence>MTKELCMRCYISGRVQGVWFRASAKNLAEQLMISGWARNLADGRVEVFACGKEDKLEEFYTWLQKGPLNARVDVCTRENLPWEDYITFDVL</sequence>
<reference key="1">
    <citation type="journal article" date="2004" name="Nat. Genet.">
        <title>Evidence in the Legionella pneumophila genome for exploitation of host cell functions and high genome plasticity.</title>
        <authorList>
            <person name="Cazalet C."/>
            <person name="Rusniok C."/>
            <person name="Brueggemann H."/>
            <person name="Zidane N."/>
            <person name="Magnier A."/>
            <person name="Ma L."/>
            <person name="Tichit M."/>
            <person name="Jarraud S."/>
            <person name="Bouchier C."/>
            <person name="Vandenesch F."/>
            <person name="Kunst F."/>
            <person name="Etienne J."/>
            <person name="Glaser P."/>
            <person name="Buchrieser C."/>
        </authorList>
    </citation>
    <scope>NUCLEOTIDE SEQUENCE [LARGE SCALE GENOMIC DNA]</scope>
    <source>
        <strain>Lens</strain>
    </source>
</reference>
<proteinExistence type="inferred from homology"/>
<name>ACYP_LEGPL</name>